<evidence type="ECO:0000250" key="1"/>
<evidence type="ECO:0000255" key="2"/>
<evidence type="ECO:0000255" key="3">
    <source>
        <dbReference type="PROSITE-ProRule" id="PRU01185"/>
    </source>
</evidence>
<evidence type="ECO:0000269" key="4">
    <source>
    </source>
</evidence>
<evidence type="ECO:0000269" key="5">
    <source>
    </source>
</evidence>
<evidence type="ECO:0000305" key="6"/>
<evidence type="ECO:0007744" key="7">
    <source>
    </source>
</evidence>
<protein>
    <recommendedName>
        <fullName>26S proteasome non-ATPase regulatory subunit 6 homolog</fullName>
    </recommendedName>
    <alternativeName>
        <fullName>26S proteasome regulatory subunit RPN7</fullName>
        <shortName>AtRPN7</shortName>
    </alternativeName>
    <alternativeName>
        <fullName>26S proteasome regulatory subunit S10 homolog</fullName>
    </alternativeName>
</protein>
<reference key="1">
    <citation type="journal article" date="2004" name="J. Biol. Chem.">
        <title>Purification of the Arabidopsis 26 S proteasome: biochemical and molecular analyses revealed the presence of multiple isoforms.</title>
        <authorList>
            <person name="Yang P."/>
            <person name="Fu H."/>
            <person name="Walker J."/>
            <person name="Papa C.M."/>
            <person name="Smalle J."/>
            <person name="Ju Y.-M."/>
            <person name="Vierstra R.D."/>
        </authorList>
    </citation>
    <scope>NUCLEOTIDE SEQUENCE [MRNA]</scope>
    <scope>SUBUNIT</scope>
    <scope>IDENTIFICATION BY MASS SPECTROMETRY</scope>
    <scope>TISSUE SPECIFICITY</scope>
    <source>
        <strain>cv. Columbia</strain>
    </source>
</reference>
<reference key="2">
    <citation type="journal article" date="1999" name="Nature">
        <title>Sequence and analysis of chromosome 4 of the plant Arabidopsis thaliana.</title>
        <authorList>
            <person name="Mayer K.F.X."/>
            <person name="Schueller C."/>
            <person name="Wambutt R."/>
            <person name="Murphy G."/>
            <person name="Volckaert G."/>
            <person name="Pohl T."/>
            <person name="Duesterhoeft A."/>
            <person name="Stiekema W."/>
            <person name="Entian K.-D."/>
            <person name="Terryn N."/>
            <person name="Harris B."/>
            <person name="Ansorge W."/>
            <person name="Brandt P."/>
            <person name="Grivell L.A."/>
            <person name="Rieger M."/>
            <person name="Weichselgartner M."/>
            <person name="de Simone V."/>
            <person name="Obermaier B."/>
            <person name="Mache R."/>
            <person name="Mueller M."/>
            <person name="Kreis M."/>
            <person name="Delseny M."/>
            <person name="Puigdomenech P."/>
            <person name="Watson M."/>
            <person name="Schmidtheini T."/>
            <person name="Reichert B."/>
            <person name="Portetelle D."/>
            <person name="Perez-Alonso M."/>
            <person name="Boutry M."/>
            <person name="Bancroft I."/>
            <person name="Vos P."/>
            <person name="Hoheisel J."/>
            <person name="Zimmermann W."/>
            <person name="Wedler H."/>
            <person name="Ridley P."/>
            <person name="Langham S.-A."/>
            <person name="McCullagh B."/>
            <person name="Bilham L."/>
            <person name="Robben J."/>
            <person name="van der Schueren J."/>
            <person name="Grymonprez B."/>
            <person name="Chuang Y.-J."/>
            <person name="Vandenbussche F."/>
            <person name="Braeken M."/>
            <person name="Weltjens I."/>
            <person name="Voet M."/>
            <person name="Bastiaens I."/>
            <person name="Aert R."/>
            <person name="Defoor E."/>
            <person name="Weitzenegger T."/>
            <person name="Bothe G."/>
            <person name="Ramsperger U."/>
            <person name="Hilbert H."/>
            <person name="Braun M."/>
            <person name="Holzer E."/>
            <person name="Brandt A."/>
            <person name="Peters S."/>
            <person name="van Staveren M."/>
            <person name="Dirkse W."/>
            <person name="Mooijman P."/>
            <person name="Klein Lankhorst R."/>
            <person name="Rose M."/>
            <person name="Hauf J."/>
            <person name="Koetter P."/>
            <person name="Berneiser S."/>
            <person name="Hempel S."/>
            <person name="Feldpausch M."/>
            <person name="Lamberth S."/>
            <person name="Van den Daele H."/>
            <person name="De Keyser A."/>
            <person name="Buysshaert C."/>
            <person name="Gielen J."/>
            <person name="Villarroel R."/>
            <person name="De Clercq R."/>
            <person name="van Montagu M."/>
            <person name="Rogers J."/>
            <person name="Cronin A."/>
            <person name="Quail M.A."/>
            <person name="Bray-Allen S."/>
            <person name="Clark L."/>
            <person name="Doggett J."/>
            <person name="Hall S."/>
            <person name="Kay M."/>
            <person name="Lennard N."/>
            <person name="McLay K."/>
            <person name="Mayes R."/>
            <person name="Pettett A."/>
            <person name="Rajandream M.A."/>
            <person name="Lyne M."/>
            <person name="Benes V."/>
            <person name="Rechmann S."/>
            <person name="Borkova D."/>
            <person name="Bloecker H."/>
            <person name="Scharfe M."/>
            <person name="Grimm M."/>
            <person name="Loehnert T.-H."/>
            <person name="Dose S."/>
            <person name="de Haan M."/>
            <person name="Maarse A.C."/>
            <person name="Schaefer M."/>
            <person name="Mueller-Auer S."/>
            <person name="Gabel C."/>
            <person name="Fuchs M."/>
            <person name="Fartmann B."/>
            <person name="Granderath K."/>
            <person name="Dauner D."/>
            <person name="Herzl A."/>
            <person name="Neumann S."/>
            <person name="Argiriou A."/>
            <person name="Vitale D."/>
            <person name="Liguori R."/>
            <person name="Piravandi E."/>
            <person name="Massenet O."/>
            <person name="Quigley F."/>
            <person name="Clabauld G."/>
            <person name="Muendlein A."/>
            <person name="Felber R."/>
            <person name="Schnabl S."/>
            <person name="Hiller R."/>
            <person name="Schmidt W."/>
            <person name="Lecharny A."/>
            <person name="Aubourg S."/>
            <person name="Chefdor F."/>
            <person name="Cooke R."/>
            <person name="Berger C."/>
            <person name="Monfort A."/>
            <person name="Casacuberta E."/>
            <person name="Gibbons T."/>
            <person name="Weber N."/>
            <person name="Vandenbol M."/>
            <person name="Bargues M."/>
            <person name="Terol J."/>
            <person name="Torres A."/>
            <person name="Perez-Perez A."/>
            <person name="Purnelle B."/>
            <person name="Bent E."/>
            <person name="Johnson S."/>
            <person name="Tacon D."/>
            <person name="Jesse T."/>
            <person name="Heijnen L."/>
            <person name="Schwarz S."/>
            <person name="Scholler P."/>
            <person name="Heber S."/>
            <person name="Francs P."/>
            <person name="Bielke C."/>
            <person name="Frishman D."/>
            <person name="Haase D."/>
            <person name="Lemcke K."/>
            <person name="Mewes H.-W."/>
            <person name="Stocker S."/>
            <person name="Zaccaria P."/>
            <person name="Bevan M."/>
            <person name="Wilson R.K."/>
            <person name="de la Bastide M."/>
            <person name="Habermann K."/>
            <person name="Parnell L."/>
            <person name="Dedhia N."/>
            <person name="Gnoj L."/>
            <person name="Schutz K."/>
            <person name="Huang E."/>
            <person name="Spiegel L."/>
            <person name="Sekhon M."/>
            <person name="Murray J."/>
            <person name="Sheet P."/>
            <person name="Cordes M."/>
            <person name="Abu-Threideh J."/>
            <person name="Stoneking T."/>
            <person name="Kalicki J."/>
            <person name="Graves T."/>
            <person name="Harmon G."/>
            <person name="Edwards J."/>
            <person name="Latreille P."/>
            <person name="Courtney L."/>
            <person name="Cloud J."/>
            <person name="Abbott A."/>
            <person name="Scott K."/>
            <person name="Johnson D."/>
            <person name="Minx P."/>
            <person name="Bentley D."/>
            <person name="Fulton B."/>
            <person name="Miller N."/>
            <person name="Greco T."/>
            <person name="Kemp K."/>
            <person name="Kramer J."/>
            <person name="Fulton L."/>
            <person name="Mardis E."/>
            <person name="Dante M."/>
            <person name="Pepin K."/>
            <person name="Hillier L.W."/>
            <person name="Nelson J."/>
            <person name="Spieth J."/>
            <person name="Ryan E."/>
            <person name="Andrews S."/>
            <person name="Geisel C."/>
            <person name="Layman D."/>
            <person name="Du H."/>
            <person name="Ali J."/>
            <person name="Berghoff A."/>
            <person name="Jones K."/>
            <person name="Drone K."/>
            <person name="Cotton M."/>
            <person name="Joshu C."/>
            <person name="Antonoiu B."/>
            <person name="Zidanic M."/>
            <person name="Strong C."/>
            <person name="Sun H."/>
            <person name="Lamar B."/>
            <person name="Yordan C."/>
            <person name="Ma P."/>
            <person name="Zhong J."/>
            <person name="Preston R."/>
            <person name="Vil D."/>
            <person name="Shekher M."/>
            <person name="Matero A."/>
            <person name="Shah R."/>
            <person name="Swaby I.K."/>
            <person name="O'Shaughnessy A."/>
            <person name="Rodriguez M."/>
            <person name="Hoffman J."/>
            <person name="Till S."/>
            <person name="Granat S."/>
            <person name="Shohdy N."/>
            <person name="Hasegawa A."/>
            <person name="Hameed A."/>
            <person name="Lodhi M."/>
            <person name="Johnson A."/>
            <person name="Chen E."/>
            <person name="Marra M.A."/>
            <person name="Martienssen R."/>
            <person name="McCombie W.R."/>
        </authorList>
    </citation>
    <scope>NUCLEOTIDE SEQUENCE [LARGE SCALE GENOMIC DNA]</scope>
    <source>
        <strain>cv. Columbia</strain>
    </source>
</reference>
<reference key="3">
    <citation type="journal article" date="2017" name="Plant J.">
        <title>Araport11: a complete reannotation of the Arabidopsis thaliana reference genome.</title>
        <authorList>
            <person name="Cheng C.Y."/>
            <person name="Krishnakumar V."/>
            <person name="Chan A.P."/>
            <person name="Thibaud-Nissen F."/>
            <person name="Schobel S."/>
            <person name="Town C.D."/>
        </authorList>
    </citation>
    <scope>GENOME REANNOTATION</scope>
    <source>
        <strain>cv. Columbia</strain>
    </source>
</reference>
<reference key="4">
    <citation type="journal article" date="2003" name="Science">
        <title>Empirical analysis of transcriptional activity in the Arabidopsis genome.</title>
        <authorList>
            <person name="Yamada K."/>
            <person name="Lim J."/>
            <person name="Dale J.M."/>
            <person name="Chen H."/>
            <person name="Shinn P."/>
            <person name="Palm C.J."/>
            <person name="Southwick A.M."/>
            <person name="Wu H.C."/>
            <person name="Kim C.J."/>
            <person name="Nguyen M."/>
            <person name="Pham P.K."/>
            <person name="Cheuk R.F."/>
            <person name="Karlin-Newmann G."/>
            <person name="Liu S.X."/>
            <person name="Lam B."/>
            <person name="Sakano H."/>
            <person name="Wu T."/>
            <person name="Yu G."/>
            <person name="Miranda M."/>
            <person name="Quach H.L."/>
            <person name="Tripp M."/>
            <person name="Chang C.H."/>
            <person name="Lee J.M."/>
            <person name="Toriumi M.J."/>
            <person name="Chan M.M."/>
            <person name="Tang C.C."/>
            <person name="Onodera C.S."/>
            <person name="Deng J.M."/>
            <person name="Akiyama K."/>
            <person name="Ansari Y."/>
            <person name="Arakawa T."/>
            <person name="Banh J."/>
            <person name="Banno F."/>
            <person name="Bowser L."/>
            <person name="Brooks S.Y."/>
            <person name="Carninci P."/>
            <person name="Chao Q."/>
            <person name="Choy N."/>
            <person name="Enju A."/>
            <person name="Goldsmith A.D."/>
            <person name="Gurjal M."/>
            <person name="Hansen N.F."/>
            <person name="Hayashizaki Y."/>
            <person name="Johnson-Hopson C."/>
            <person name="Hsuan V.W."/>
            <person name="Iida K."/>
            <person name="Karnes M."/>
            <person name="Khan S."/>
            <person name="Koesema E."/>
            <person name="Ishida J."/>
            <person name="Jiang P.X."/>
            <person name="Jones T."/>
            <person name="Kawai J."/>
            <person name="Kamiya A."/>
            <person name="Meyers C."/>
            <person name="Nakajima M."/>
            <person name="Narusaka M."/>
            <person name="Seki M."/>
            <person name="Sakurai T."/>
            <person name="Satou M."/>
            <person name="Tamse R."/>
            <person name="Vaysberg M."/>
            <person name="Wallender E.K."/>
            <person name="Wong C."/>
            <person name="Yamamura Y."/>
            <person name="Yuan S."/>
            <person name="Shinozaki K."/>
            <person name="Davis R.W."/>
            <person name="Theologis A."/>
            <person name="Ecker J.R."/>
        </authorList>
    </citation>
    <scope>NUCLEOTIDE SEQUENCE [LARGE SCALE MRNA]</scope>
    <source>
        <strain>cv. Columbia</strain>
    </source>
</reference>
<reference key="5">
    <citation type="submission" date="2002-03" db="EMBL/GenBank/DDBJ databases">
        <title>Full-length cDNA from Arabidopsis thaliana.</title>
        <authorList>
            <person name="Brover V.V."/>
            <person name="Troukhan M.E."/>
            <person name="Alexandrov N.A."/>
            <person name="Lu Y.-P."/>
            <person name="Flavell R.B."/>
            <person name="Feldmann K.A."/>
        </authorList>
    </citation>
    <scope>NUCLEOTIDE SEQUENCE [LARGE SCALE MRNA]</scope>
</reference>
<reference key="6">
    <citation type="journal article" date="2010" name="J. Biol. Chem.">
        <title>Affinity purification of the Arabidopsis 26 S proteasome reveals a diverse array of plant proteolytic complexes.</title>
        <authorList>
            <person name="Book A.J."/>
            <person name="Gladman N.P."/>
            <person name="Lee S.S."/>
            <person name="Scalf M."/>
            <person name="Smith L.M."/>
            <person name="Vierstra R.D."/>
        </authorList>
    </citation>
    <scope>IDENTIFICATION BY MASS SPECTROMETRY</scope>
    <scope>CHARACTERIZATION OF THE 26S PROTEASOME COMPLEX</scope>
    <scope>SUBUNIT</scope>
    <scope>ACETYLATION AT MET-1</scope>
</reference>
<reference key="7">
    <citation type="journal article" date="2012" name="Mol. Cell. Proteomics">
        <title>Comparative large-scale characterisation of plant vs. mammal proteins reveals similar and idiosyncratic N-alpha acetylation features.</title>
        <authorList>
            <person name="Bienvenut W.V."/>
            <person name="Sumpton D."/>
            <person name="Martinez A."/>
            <person name="Lilla S."/>
            <person name="Espagne C."/>
            <person name="Meinnel T."/>
            <person name="Giglione C."/>
        </authorList>
    </citation>
    <scope>ACETYLATION [LARGE SCALE ANALYSIS] AT MET-1</scope>
    <scope>IDENTIFICATION BY MASS SPECTROMETRY [LARGE SCALE ANALYSIS]</scope>
</reference>
<organism>
    <name type="scientific">Arabidopsis thaliana</name>
    <name type="common">Mouse-ear cress</name>
    <dbReference type="NCBI Taxonomy" id="3702"/>
    <lineage>
        <taxon>Eukaryota</taxon>
        <taxon>Viridiplantae</taxon>
        <taxon>Streptophyta</taxon>
        <taxon>Embryophyta</taxon>
        <taxon>Tracheophyta</taxon>
        <taxon>Spermatophyta</taxon>
        <taxon>Magnoliopsida</taxon>
        <taxon>eudicotyledons</taxon>
        <taxon>Gunneridae</taxon>
        <taxon>Pentapetalae</taxon>
        <taxon>rosids</taxon>
        <taxon>malvids</taxon>
        <taxon>Brassicales</taxon>
        <taxon>Brassicaceae</taxon>
        <taxon>Camelineae</taxon>
        <taxon>Arabidopsis</taxon>
    </lineage>
</organism>
<proteinExistence type="evidence at protein level"/>
<keyword id="KW-0007">Acetylation</keyword>
<keyword id="KW-0175">Coiled coil</keyword>
<keyword id="KW-0647">Proteasome</keyword>
<keyword id="KW-1185">Reference proteome</keyword>
<feature type="chain" id="PRO_0000173842" description="26S proteasome non-ATPase regulatory subunit 6 homolog">
    <location>
        <begin position="1"/>
        <end position="387"/>
    </location>
</feature>
<feature type="domain" description="PCI" evidence="3">
    <location>
        <begin position="191"/>
        <end position="359"/>
    </location>
</feature>
<feature type="coiled-coil region" evidence="2">
    <location>
        <begin position="65"/>
        <end position="101"/>
    </location>
</feature>
<feature type="modified residue" description="N-acetylmethionine" evidence="5 7">
    <location>
        <position position="1"/>
    </location>
</feature>
<dbReference type="EMBL" id="AY230838">
    <property type="protein sequence ID" value="AAP86665.1"/>
    <property type="molecule type" value="mRNA"/>
</dbReference>
<dbReference type="EMBL" id="AL049657">
    <property type="protein sequence ID" value="CAB41122.1"/>
    <property type="status" value="ALT_SEQ"/>
    <property type="molecule type" value="Genomic_DNA"/>
</dbReference>
<dbReference type="EMBL" id="AL161562">
    <property type="protein sequence ID" value="CAB79392.1"/>
    <property type="status" value="ALT_SEQ"/>
    <property type="molecule type" value="Genomic_DNA"/>
</dbReference>
<dbReference type="EMBL" id="CP002687">
    <property type="protein sequence ID" value="AEE84966.1"/>
    <property type="molecule type" value="Genomic_DNA"/>
</dbReference>
<dbReference type="EMBL" id="CP002687">
    <property type="protein sequence ID" value="AEE84967.1"/>
    <property type="molecule type" value="Genomic_DNA"/>
</dbReference>
<dbReference type="EMBL" id="AY054500">
    <property type="protein sequence ID" value="AAK96691.1"/>
    <property type="molecule type" value="mRNA"/>
</dbReference>
<dbReference type="EMBL" id="AY093269">
    <property type="protein sequence ID" value="AAM13268.1"/>
    <property type="molecule type" value="mRNA"/>
</dbReference>
<dbReference type="EMBL" id="BT000653">
    <property type="protein sequence ID" value="AAN31800.1"/>
    <property type="molecule type" value="mRNA"/>
</dbReference>
<dbReference type="EMBL" id="AY087847">
    <property type="protein sequence ID" value="AAM65400.1"/>
    <property type="molecule type" value="mRNA"/>
</dbReference>
<dbReference type="PIR" id="T06666">
    <property type="entry name" value="T06666"/>
</dbReference>
<dbReference type="RefSeq" id="NP_567709.1">
    <property type="nucleotide sequence ID" value="NM_118615.3"/>
</dbReference>
<dbReference type="RefSeq" id="NP_974611.1">
    <property type="nucleotide sequence ID" value="NM_202882.1"/>
</dbReference>
<dbReference type="SMR" id="Q93Y35"/>
<dbReference type="BioGRID" id="13874">
    <property type="interactions" value="95"/>
</dbReference>
<dbReference type="FunCoup" id="Q93Y35">
    <property type="interactions" value="4976"/>
</dbReference>
<dbReference type="IntAct" id="Q93Y35">
    <property type="interactions" value="18"/>
</dbReference>
<dbReference type="STRING" id="3702.Q93Y35"/>
<dbReference type="iPTMnet" id="Q93Y35"/>
<dbReference type="PaxDb" id="3702-AT4G24820.1"/>
<dbReference type="ProteomicsDB" id="226234"/>
<dbReference type="DNASU" id="828585"/>
<dbReference type="EnsemblPlants" id="AT4G24820.1">
    <property type="protein sequence ID" value="AT4G24820.1"/>
    <property type="gene ID" value="AT4G24820"/>
</dbReference>
<dbReference type="EnsemblPlants" id="AT4G24820.2">
    <property type="protein sequence ID" value="AT4G24820.2"/>
    <property type="gene ID" value="AT4G24820"/>
</dbReference>
<dbReference type="GeneID" id="828585"/>
<dbReference type="Gramene" id="AT4G24820.1">
    <property type="protein sequence ID" value="AT4G24820.1"/>
    <property type="gene ID" value="AT4G24820"/>
</dbReference>
<dbReference type="Gramene" id="AT4G24820.2">
    <property type="protein sequence ID" value="AT4G24820.2"/>
    <property type="gene ID" value="AT4G24820"/>
</dbReference>
<dbReference type="KEGG" id="ath:AT4G24820"/>
<dbReference type="Araport" id="AT4G24820"/>
<dbReference type="TAIR" id="AT4G24820"/>
<dbReference type="eggNOG" id="KOG0687">
    <property type="taxonomic scope" value="Eukaryota"/>
</dbReference>
<dbReference type="HOGENOM" id="CLU_031814_0_0_1"/>
<dbReference type="InParanoid" id="Q93Y35"/>
<dbReference type="OMA" id="RLHCKVD"/>
<dbReference type="OrthoDB" id="1061227at2759"/>
<dbReference type="PhylomeDB" id="Q93Y35"/>
<dbReference type="CD-CODE" id="4299E36E">
    <property type="entry name" value="Nucleolus"/>
</dbReference>
<dbReference type="PRO" id="PR:Q93Y35"/>
<dbReference type="Proteomes" id="UP000006548">
    <property type="component" value="Chromosome 4"/>
</dbReference>
<dbReference type="ExpressionAtlas" id="Q93Y35">
    <property type="expression patterns" value="baseline and differential"/>
</dbReference>
<dbReference type="GO" id="GO:0005829">
    <property type="term" value="C:cytosol"/>
    <property type="evidence" value="ECO:0007005"/>
    <property type="project" value="TAIR"/>
</dbReference>
<dbReference type="GO" id="GO:0005634">
    <property type="term" value="C:nucleus"/>
    <property type="evidence" value="ECO:0000304"/>
    <property type="project" value="TAIR"/>
</dbReference>
<dbReference type="GO" id="GO:0000502">
    <property type="term" value="C:proteasome complex"/>
    <property type="evidence" value="ECO:0000314"/>
    <property type="project" value="TAIR"/>
</dbReference>
<dbReference type="GO" id="GO:0030163">
    <property type="term" value="P:protein catabolic process"/>
    <property type="evidence" value="ECO:0000304"/>
    <property type="project" value="TAIR"/>
</dbReference>
<dbReference type="FunFam" id="1.25.40.570:FF:000005">
    <property type="entry name" value="26S proteasome regulatory subunit N7"/>
    <property type="match status" value="1"/>
</dbReference>
<dbReference type="Gene3D" id="1.25.40.570">
    <property type="match status" value="1"/>
</dbReference>
<dbReference type="InterPro" id="IPR000717">
    <property type="entry name" value="PCI_dom"/>
</dbReference>
<dbReference type="InterPro" id="IPR019585">
    <property type="entry name" value="Rpn7/CSN1"/>
</dbReference>
<dbReference type="InterPro" id="IPR045135">
    <property type="entry name" value="Rpn7_N"/>
</dbReference>
<dbReference type="InterPro" id="IPR049549">
    <property type="entry name" value="RPN7_PSMD6_C"/>
</dbReference>
<dbReference type="InterPro" id="IPR036390">
    <property type="entry name" value="WH_DNA-bd_sf"/>
</dbReference>
<dbReference type="PANTHER" id="PTHR14145:SF1">
    <property type="entry name" value="26S PROTEASOME NON-ATPASE REGULATORY SUBUNIT 6"/>
    <property type="match status" value="1"/>
</dbReference>
<dbReference type="PANTHER" id="PTHR14145">
    <property type="entry name" value="26S PROTESOME SUBUNIT 6"/>
    <property type="match status" value="1"/>
</dbReference>
<dbReference type="Pfam" id="PF01399">
    <property type="entry name" value="PCI"/>
    <property type="match status" value="1"/>
</dbReference>
<dbReference type="Pfam" id="PF10602">
    <property type="entry name" value="RPN7"/>
    <property type="match status" value="1"/>
</dbReference>
<dbReference type="Pfam" id="PF21154">
    <property type="entry name" value="RPN7_PSMD6_C"/>
    <property type="match status" value="1"/>
</dbReference>
<dbReference type="SMART" id="SM00088">
    <property type="entry name" value="PINT"/>
    <property type="match status" value="1"/>
</dbReference>
<dbReference type="SUPFAM" id="SSF46785">
    <property type="entry name" value="Winged helix' DNA-binding domain"/>
    <property type="match status" value="1"/>
</dbReference>
<dbReference type="PROSITE" id="PS50250">
    <property type="entry name" value="PCI"/>
    <property type="match status" value="1"/>
</dbReference>
<gene>
    <name type="primary">RPN7</name>
    <name type="ordered locus">At4g24820</name>
    <name type="ORF">F6I7.30</name>
</gene>
<name>PSMD6_ARATH</name>
<comment type="function">
    <text evidence="1">Acts as a regulatory subunit of the 26S proteasome which is involved in the ATP-dependent degradation of ubiquitinated proteins.</text>
</comment>
<comment type="subunit">
    <text evidence="4 5">Component of the 19S regulatory particle (RP/PA700) lid subcomplex of the 26S proteasome. The 26S proteasome is composed of a core protease (CP), known as the 20S proteasome, capped at one or both ends by the 19S regulatory particle (RP/PA700). The RP/PA700 complex is composed of at least 17 different subunits in two subcomplexes, the base and the lid, which form the portions proximal and distal to the 20S proteolytic core, respectively.</text>
</comment>
<comment type="tissue specificity">
    <text evidence="4">Ubiquitous with highest expression in flowers.</text>
</comment>
<comment type="similarity">
    <text evidence="6">Belongs to the proteasome subunit S10 family.</text>
</comment>
<comment type="sequence caution" evidence="6">
    <conflict type="erroneous gene model prediction">
        <sequence resource="EMBL-CDS" id="CAB41122"/>
    </conflict>
</comment>
<comment type="sequence caution" evidence="6">
    <conflict type="erroneous gene model prediction">
        <sequence resource="EMBL-CDS" id="CAB79392"/>
    </conflict>
</comment>
<sequence length="387" mass="44282">MDGGAEGSQQPHLILANKLFLLTHPDVPDIEKVQLKSEVLDFIRSHGMAPLYETLIASSVLDLDQSLLESMRAANEEELKKLDEKIADAEENLGESEVREAHLAKALYFIRISDKEKALEQLKLTEGKTVAVGQKMDVVFYTLQLAFFYMDFDLVSKSIDKAKKLFEEGGDWERKNRLKVYEGLYCMSTRNFKKAASLFLDSISTFTTYEIFPYETFIFYTVLTSIITLDRVSLKQKVVDAPEILTVLGKIPFLSEFLNSLYECQYKAFFSAFAGMAVQIKYDRYLYPHFRFYMREVRTVVYSQFLESYKSVTVEAMAKAFGVSVDFIDQELSRFIAAGKLHCKIDKVAGVLETNRPDAKNALYQATIKQGDFLLNRIQKLSRVIDL</sequence>
<accession>Q93Y35</accession>
<accession>Q6EMB5</accession>
<accession>Q9SZX2</accession>